<accession>Q567Y6</accession>
<name>IFT22_DANRE</name>
<gene>
    <name type="primary">ift22</name>
    <name type="synonym">rabl5</name>
    <name type="ORF">zgc:110645</name>
</gene>
<sequence>MFKVKILLIGPSECGKTALANFLSDTTESIGADYSPTQGVRILEFESHNLHNGNKSSSCDVELWDCAGDFKFESCWPALMKDSNGVAVVFNPDVPSHLKEIETWYSAFISSQGLLEGQCLLIAHHKPGSGADTNRPSLAPQLNKLPLIHSNLEEEPEEVRQEFNKYLGKVMRMLSESQEREEMSIIT</sequence>
<reference key="1">
    <citation type="submission" date="2005-04" db="EMBL/GenBank/DDBJ databases">
        <authorList>
            <consortium name="NIH - Zebrafish Gene Collection (ZGC) project"/>
        </authorList>
    </citation>
    <scope>NUCLEOTIDE SEQUENCE [LARGE SCALE MRNA]</scope>
    <source>
        <tissue>Embryo</tissue>
    </source>
</reference>
<keyword id="KW-0342">GTP-binding</keyword>
<keyword id="KW-0547">Nucleotide-binding</keyword>
<keyword id="KW-1185">Reference proteome</keyword>
<comment type="similarity">
    <text evidence="2">Belongs to the small GTPase superfamily. Rab family.</text>
</comment>
<protein>
    <recommendedName>
        <fullName>Intraflagellar transport protein 22 homolog</fullName>
    </recommendedName>
    <alternativeName>
        <fullName>Rab-like protein 5</fullName>
    </alternativeName>
</protein>
<evidence type="ECO:0000250" key="1"/>
<evidence type="ECO:0000305" key="2"/>
<feature type="chain" id="PRO_0000253737" description="Intraflagellar transport protein 22 homolog">
    <location>
        <begin position="1"/>
        <end position="187"/>
    </location>
</feature>
<feature type="binding site" evidence="1">
    <location>
        <begin position="10"/>
        <end position="17"/>
    </location>
    <ligand>
        <name>GTP</name>
        <dbReference type="ChEBI" id="CHEBI:37565"/>
    </ligand>
</feature>
<feature type="binding site" evidence="1">
    <location>
        <begin position="65"/>
        <end position="69"/>
    </location>
    <ligand>
        <name>GTP</name>
        <dbReference type="ChEBI" id="CHEBI:37565"/>
    </ligand>
</feature>
<feature type="binding site" evidence="1">
    <location>
        <begin position="125"/>
        <end position="128"/>
    </location>
    <ligand>
        <name>GTP</name>
        <dbReference type="ChEBI" id="CHEBI:37565"/>
    </ligand>
</feature>
<dbReference type="EMBL" id="BC092964">
    <property type="protein sequence ID" value="AAH92964.1"/>
    <property type="molecule type" value="mRNA"/>
</dbReference>
<dbReference type="RefSeq" id="NP_001017884.1">
    <property type="nucleotide sequence ID" value="NM_001017884.1"/>
</dbReference>
<dbReference type="SMR" id="Q567Y6"/>
<dbReference type="FunCoup" id="Q567Y6">
    <property type="interactions" value="378"/>
</dbReference>
<dbReference type="STRING" id="7955.ENSDARP00000011140"/>
<dbReference type="PaxDb" id="7955-ENSDARP00000011140"/>
<dbReference type="Ensembl" id="ENSDART00000016709">
    <property type="protein sequence ID" value="ENSDARP00000011140"/>
    <property type="gene ID" value="ENSDARG00000020822"/>
</dbReference>
<dbReference type="GeneID" id="550583"/>
<dbReference type="KEGG" id="dre:550583"/>
<dbReference type="AGR" id="ZFIN:ZDB-GENE-050417-439"/>
<dbReference type="CTD" id="64792"/>
<dbReference type="ZFIN" id="ZDB-GENE-050417-439">
    <property type="gene designation" value="ift22"/>
</dbReference>
<dbReference type="eggNOG" id="ENOG502RXD4">
    <property type="taxonomic scope" value="Eukaryota"/>
</dbReference>
<dbReference type="HOGENOM" id="CLU_096604_0_0_1"/>
<dbReference type="InParanoid" id="Q567Y6"/>
<dbReference type="OMA" id="NERHDQE"/>
<dbReference type="OrthoDB" id="275177at2759"/>
<dbReference type="PhylomeDB" id="Q567Y6"/>
<dbReference type="TreeFam" id="TF313208"/>
<dbReference type="PRO" id="PR:Q567Y6"/>
<dbReference type="Proteomes" id="UP000000437">
    <property type="component" value="Chromosome 5"/>
</dbReference>
<dbReference type="Bgee" id="ENSDARG00000020822">
    <property type="expression patterns" value="Expressed in testis and 22 other cell types or tissues"/>
</dbReference>
<dbReference type="GO" id="GO:0012505">
    <property type="term" value="C:endomembrane system"/>
    <property type="evidence" value="ECO:0000318"/>
    <property type="project" value="GO_Central"/>
</dbReference>
<dbReference type="GO" id="GO:0030992">
    <property type="term" value="C:intraciliary transport particle B"/>
    <property type="evidence" value="ECO:0000250"/>
    <property type="project" value="UniProtKB"/>
</dbReference>
<dbReference type="GO" id="GO:0005525">
    <property type="term" value="F:GTP binding"/>
    <property type="evidence" value="ECO:0007669"/>
    <property type="project" value="UniProtKB-KW"/>
</dbReference>
<dbReference type="GO" id="GO:0003924">
    <property type="term" value="F:GTPase activity"/>
    <property type="evidence" value="ECO:0000318"/>
    <property type="project" value="GO_Central"/>
</dbReference>
<dbReference type="GO" id="GO:0006886">
    <property type="term" value="P:intracellular protein transport"/>
    <property type="evidence" value="ECO:0000318"/>
    <property type="project" value="GO_Central"/>
</dbReference>
<dbReference type="FunFam" id="3.40.50.300:FF:001100">
    <property type="entry name" value="intraflagellar transport protein 22 homolog"/>
    <property type="match status" value="1"/>
</dbReference>
<dbReference type="Gene3D" id="3.40.50.300">
    <property type="entry name" value="P-loop containing nucleotide triphosphate hydrolases"/>
    <property type="match status" value="1"/>
</dbReference>
<dbReference type="InterPro" id="IPR027417">
    <property type="entry name" value="P-loop_NTPase"/>
</dbReference>
<dbReference type="PANTHER" id="PTHR24073">
    <property type="entry name" value="DRAB5-RELATED"/>
    <property type="match status" value="1"/>
</dbReference>
<dbReference type="Pfam" id="PF08477">
    <property type="entry name" value="Roc"/>
    <property type="match status" value="1"/>
</dbReference>
<dbReference type="SUPFAM" id="SSF52540">
    <property type="entry name" value="P-loop containing nucleoside triphosphate hydrolases"/>
    <property type="match status" value="1"/>
</dbReference>
<organism>
    <name type="scientific">Danio rerio</name>
    <name type="common">Zebrafish</name>
    <name type="synonym">Brachydanio rerio</name>
    <dbReference type="NCBI Taxonomy" id="7955"/>
    <lineage>
        <taxon>Eukaryota</taxon>
        <taxon>Metazoa</taxon>
        <taxon>Chordata</taxon>
        <taxon>Craniata</taxon>
        <taxon>Vertebrata</taxon>
        <taxon>Euteleostomi</taxon>
        <taxon>Actinopterygii</taxon>
        <taxon>Neopterygii</taxon>
        <taxon>Teleostei</taxon>
        <taxon>Ostariophysi</taxon>
        <taxon>Cypriniformes</taxon>
        <taxon>Danionidae</taxon>
        <taxon>Danioninae</taxon>
        <taxon>Danio</taxon>
    </lineage>
</organism>
<proteinExistence type="evidence at transcript level"/>